<comment type="function">
    <text evidence="1">Single strand-specific metallo-endoribonuclease involved in late-stage 70S ribosome quality control and in maturation of the 3' terminus of the 16S rRNA.</text>
</comment>
<comment type="cofactor">
    <cofactor evidence="1">
        <name>Zn(2+)</name>
        <dbReference type="ChEBI" id="CHEBI:29105"/>
    </cofactor>
    <text evidence="1">Binds 1 zinc ion.</text>
</comment>
<comment type="subcellular location">
    <subcellularLocation>
        <location evidence="1">Cytoplasm</location>
    </subcellularLocation>
</comment>
<comment type="similarity">
    <text evidence="1">Belongs to the endoribonuclease YbeY family.</text>
</comment>
<accession>B7HCS7</accession>
<sequence length="156" mass="18042">MSLLIDFIDETEEVKEEYMSLIREVLEKAAQMESIEDGAEVSVTFVDNERIREINRDYRDKDQPTDVISFAMEEMGEGEMEIVGAEMPRMLGDLIISIPRAKEQAEEYGHSFDRELGFLALHGFLHLLGYDHMTEEDEKEMFGRQKEILEAFGLGR</sequence>
<proteinExistence type="inferred from homology"/>
<feature type="chain" id="PRO_1000199951" description="Endoribonuclease YbeY">
    <location>
        <begin position="1"/>
        <end position="156"/>
    </location>
</feature>
<feature type="binding site" evidence="1">
    <location>
        <position position="122"/>
    </location>
    <ligand>
        <name>Zn(2+)</name>
        <dbReference type="ChEBI" id="CHEBI:29105"/>
        <note>catalytic</note>
    </ligand>
</feature>
<feature type="binding site" evidence="1">
    <location>
        <position position="126"/>
    </location>
    <ligand>
        <name>Zn(2+)</name>
        <dbReference type="ChEBI" id="CHEBI:29105"/>
        <note>catalytic</note>
    </ligand>
</feature>
<feature type="binding site" evidence="1">
    <location>
        <position position="132"/>
    </location>
    <ligand>
        <name>Zn(2+)</name>
        <dbReference type="ChEBI" id="CHEBI:29105"/>
        <note>catalytic</note>
    </ligand>
</feature>
<gene>
    <name evidence="1" type="primary">ybeY</name>
    <name type="ordered locus">BCB4264_A4420</name>
</gene>
<protein>
    <recommendedName>
        <fullName evidence="1">Endoribonuclease YbeY</fullName>
        <ecNumber evidence="1">3.1.-.-</ecNumber>
    </recommendedName>
</protein>
<evidence type="ECO:0000255" key="1">
    <source>
        <dbReference type="HAMAP-Rule" id="MF_00009"/>
    </source>
</evidence>
<reference key="1">
    <citation type="submission" date="2008-10" db="EMBL/GenBank/DDBJ databases">
        <title>Genome sequence of Bacillus cereus B4264.</title>
        <authorList>
            <person name="Dodson R.J."/>
            <person name="Durkin A.S."/>
            <person name="Rosovitz M.J."/>
            <person name="Rasko D.A."/>
            <person name="Hoffmaster A."/>
            <person name="Ravel J."/>
            <person name="Sutton G."/>
        </authorList>
    </citation>
    <scope>NUCLEOTIDE SEQUENCE [LARGE SCALE GENOMIC DNA]</scope>
    <source>
        <strain>B4264</strain>
    </source>
</reference>
<name>YBEY_BACC4</name>
<organism>
    <name type="scientific">Bacillus cereus (strain B4264)</name>
    <dbReference type="NCBI Taxonomy" id="405532"/>
    <lineage>
        <taxon>Bacteria</taxon>
        <taxon>Bacillati</taxon>
        <taxon>Bacillota</taxon>
        <taxon>Bacilli</taxon>
        <taxon>Bacillales</taxon>
        <taxon>Bacillaceae</taxon>
        <taxon>Bacillus</taxon>
        <taxon>Bacillus cereus group</taxon>
    </lineage>
</organism>
<keyword id="KW-0963">Cytoplasm</keyword>
<keyword id="KW-0255">Endonuclease</keyword>
<keyword id="KW-0378">Hydrolase</keyword>
<keyword id="KW-0479">Metal-binding</keyword>
<keyword id="KW-0540">Nuclease</keyword>
<keyword id="KW-0690">Ribosome biogenesis</keyword>
<keyword id="KW-0698">rRNA processing</keyword>
<keyword id="KW-0862">Zinc</keyword>
<dbReference type="EC" id="3.1.-.-" evidence="1"/>
<dbReference type="EMBL" id="CP001176">
    <property type="protein sequence ID" value="ACK61782.1"/>
    <property type="molecule type" value="Genomic_DNA"/>
</dbReference>
<dbReference type="RefSeq" id="WP_000054687.1">
    <property type="nucleotide sequence ID" value="NC_011725.1"/>
</dbReference>
<dbReference type="SMR" id="B7HCS7"/>
<dbReference type="KEGG" id="bcb:BCB4264_A4420"/>
<dbReference type="HOGENOM" id="CLU_106710_3_0_9"/>
<dbReference type="Proteomes" id="UP000007096">
    <property type="component" value="Chromosome"/>
</dbReference>
<dbReference type="GO" id="GO:0005737">
    <property type="term" value="C:cytoplasm"/>
    <property type="evidence" value="ECO:0007669"/>
    <property type="project" value="UniProtKB-SubCell"/>
</dbReference>
<dbReference type="GO" id="GO:0004222">
    <property type="term" value="F:metalloendopeptidase activity"/>
    <property type="evidence" value="ECO:0007669"/>
    <property type="project" value="InterPro"/>
</dbReference>
<dbReference type="GO" id="GO:0004521">
    <property type="term" value="F:RNA endonuclease activity"/>
    <property type="evidence" value="ECO:0007669"/>
    <property type="project" value="UniProtKB-UniRule"/>
</dbReference>
<dbReference type="GO" id="GO:0008270">
    <property type="term" value="F:zinc ion binding"/>
    <property type="evidence" value="ECO:0007669"/>
    <property type="project" value="UniProtKB-UniRule"/>
</dbReference>
<dbReference type="GO" id="GO:0006364">
    <property type="term" value="P:rRNA processing"/>
    <property type="evidence" value="ECO:0007669"/>
    <property type="project" value="UniProtKB-UniRule"/>
</dbReference>
<dbReference type="Gene3D" id="3.40.390.30">
    <property type="entry name" value="Metalloproteases ('zincins'), catalytic domain"/>
    <property type="match status" value="1"/>
</dbReference>
<dbReference type="HAMAP" id="MF_00009">
    <property type="entry name" value="Endoribonucl_YbeY"/>
    <property type="match status" value="1"/>
</dbReference>
<dbReference type="InterPro" id="IPR023091">
    <property type="entry name" value="MetalPrtase_cat_dom_sf_prd"/>
</dbReference>
<dbReference type="InterPro" id="IPR002036">
    <property type="entry name" value="YbeY"/>
</dbReference>
<dbReference type="InterPro" id="IPR020549">
    <property type="entry name" value="YbeY_CS"/>
</dbReference>
<dbReference type="NCBIfam" id="TIGR00043">
    <property type="entry name" value="rRNA maturation RNase YbeY"/>
    <property type="match status" value="1"/>
</dbReference>
<dbReference type="PANTHER" id="PTHR46986">
    <property type="entry name" value="ENDORIBONUCLEASE YBEY, CHLOROPLASTIC"/>
    <property type="match status" value="1"/>
</dbReference>
<dbReference type="PANTHER" id="PTHR46986:SF1">
    <property type="entry name" value="ENDORIBONUCLEASE YBEY, CHLOROPLASTIC"/>
    <property type="match status" value="1"/>
</dbReference>
<dbReference type="Pfam" id="PF02130">
    <property type="entry name" value="YbeY"/>
    <property type="match status" value="1"/>
</dbReference>
<dbReference type="SUPFAM" id="SSF55486">
    <property type="entry name" value="Metalloproteases ('zincins'), catalytic domain"/>
    <property type="match status" value="1"/>
</dbReference>
<dbReference type="PROSITE" id="PS01306">
    <property type="entry name" value="UPF0054"/>
    <property type="match status" value="1"/>
</dbReference>